<comment type="function">
    <text evidence="2 8">Receptor for Wnt proteins. Functions in the canonical Wnt/beta-catenin signaling pathway (By similarity). The canonical Wnt/beta-catenin signaling pathway leads to the activation of disheveled proteins, inhibition of GSK-3 kinase, nuclear accumulation of beta-catenin and activation of Wnt target genes. A second signaling pathway involving PKC and calcium fluxes has been seen for some family members, but it is not yet clear if it represents a distinct pathway or if it can be integrated in the canonical pathway, as PKC seems to be required for Wnt-mediated inactivation of GSK-3 kinase. Both pathways seem to involve interactions with G-proteins. May be involved in transduction and intercellular transmission of polarity information during tissue morphogenesis and/or in differentiated tissues (Probable).</text>
</comment>
<comment type="subunit">
    <text evidence="2 7">Interacts with WNT7B (By similarity). Interacts with MYOC (PubMed:19188438).</text>
</comment>
<comment type="interaction">
    <interactant intactId="EBI-8803802">
        <id>Q9ULW2</id>
    </interactant>
    <interactant intactId="EBI-748961">
        <id>O95273</id>
        <label>CCNDBP1</label>
    </interactant>
    <organismsDiffer>false</organismsDiffer>
    <experiments>3</experiments>
</comment>
<comment type="interaction">
    <interactant intactId="EBI-8803802">
        <id>Q9ULW2</id>
    </interactant>
    <interactant intactId="EBI-3867333">
        <id>A8MQ03</id>
        <label>CYSRT1</label>
    </interactant>
    <organismsDiffer>false</organismsDiffer>
    <experiments>3</experiments>
</comment>
<comment type="interaction">
    <interactant intactId="EBI-8803802">
        <id>Q9ULW2</id>
    </interactant>
    <interactant intactId="EBI-8803836">
        <id>Q9Y5L2</id>
        <label>HILPDA</label>
    </interactant>
    <organismsDiffer>false</organismsDiffer>
    <experiments>2</experiments>
</comment>
<comment type="interaction">
    <interactant intactId="EBI-8803802">
        <id>Q9ULW2</id>
    </interactant>
    <interactant intactId="EBI-11959885">
        <id>Q07627</id>
        <label>KRTAP1-1</label>
    </interactant>
    <organismsDiffer>false</organismsDiffer>
    <experiments>3</experiments>
</comment>
<comment type="interaction">
    <interactant intactId="EBI-8803802">
        <id>Q9ULW2</id>
    </interactant>
    <interactant intactId="EBI-10171774">
        <id>P60410</id>
        <label>KRTAP10-8</label>
    </interactant>
    <organismsDiffer>false</organismsDiffer>
    <experiments>3</experiments>
</comment>
<comment type="interaction">
    <interactant intactId="EBI-8803802">
        <id>Q9ULW2</id>
    </interactant>
    <interactant intactId="EBI-22310682">
        <id>P0DPK4</id>
        <label>NOTCH2NLC</label>
    </interactant>
    <organismsDiffer>false</organismsDiffer>
    <experiments>3</experiments>
</comment>
<comment type="interaction">
    <interactant intactId="EBI-8803802">
        <id>Q9ULW2</id>
    </interactant>
    <interactant intactId="EBI-395883">
        <id>P07237</id>
        <label>P4HB</label>
    </interactant>
    <organismsDiffer>false</organismsDiffer>
    <experiments>3</experiments>
</comment>
<comment type="subcellular location">
    <subcellularLocation>
        <location evidence="9">Cell membrane</location>
        <topology evidence="3">Multi-pass membrane protein</topology>
    </subcellularLocation>
</comment>
<comment type="tissue specificity">
    <text evidence="6">Highest levels in the placenta and fetal kidney, followed by fetal lung and brain. In adult brain, abundantly expressed in the cerebellum, followed by cerebral cortex, medulla and spinal cord; very low levels in total brain, frontal lobe, temporal lobe and putamen. Weak expression detected in adult brain, heart, lung, skeletal muscle, pancreas, spleen and prostate.</text>
</comment>
<comment type="domain">
    <text evidence="1">Lys-Thr-X-X-X-Trp motif interacts with the PDZ domain of Dvl (Disheveled) family members and is involved in the activation of the Wnt/beta-catenin signaling pathway.</text>
</comment>
<comment type="domain">
    <text evidence="1">The FZ domain is involved in binding with Wnt ligands.</text>
</comment>
<comment type="PTM">
    <text evidence="1">Ubiquitinated by ZNRF3, leading to its degradation by the proteasome.</text>
</comment>
<comment type="similarity">
    <text evidence="8">Belongs to the G-protein coupled receptor Fz/Smo family.</text>
</comment>
<proteinExistence type="evidence at protein level"/>
<organism>
    <name type="scientific">Homo sapiens</name>
    <name type="common">Human</name>
    <dbReference type="NCBI Taxonomy" id="9606"/>
    <lineage>
        <taxon>Eukaryota</taxon>
        <taxon>Metazoa</taxon>
        <taxon>Chordata</taxon>
        <taxon>Craniata</taxon>
        <taxon>Vertebrata</taxon>
        <taxon>Euteleostomi</taxon>
        <taxon>Mammalia</taxon>
        <taxon>Eutheria</taxon>
        <taxon>Euarchontoglires</taxon>
        <taxon>Primates</taxon>
        <taxon>Haplorrhini</taxon>
        <taxon>Catarrhini</taxon>
        <taxon>Hominidae</taxon>
        <taxon>Homo</taxon>
    </lineage>
</organism>
<gene>
    <name type="primary">FZD10</name>
</gene>
<protein>
    <recommendedName>
        <fullName>Frizzled-10</fullName>
        <shortName>Fz-10</shortName>
        <shortName>hFz10</shortName>
    </recommendedName>
    <alternativeName>
        <fullName>FzE7</fullName>
    </alternativeName>
    <cdAntigenName>CD350</cdAntigenName>
</protein>
<reference key="1">
    <citation type="journal article" date="1999" name="Biochem. Biophys. Res. Commun.">
        <title>Molecular cloning of Frizzled-10, a novel member of the Frizzled gene family.</title>
        <authorList>
            <person name="Koike J."/>
            <person name="Takagi A."/>
            <person name="Miwa T."/>
            <person name="Hirai M."/>
            <person name="Terada M."/>
            <person name="Katoh M."/>
        </authorList>
    </citation>
    <scope>NUCLEOTIDE SEQUENCE [MRNA]</scope>
    <scope>TISSUE SPECIFICITY</scope>
    <source>
        <tissue>Fetal kidney</tissue>
        <tissue>Fetal lung</tissue>
    </source>
</reference>
<reference key="2">
    <citation type="journal article" date="2004" name="Genome Res.">
        <title>The status, quality, and expansion of the NIH full-length cDNA project: the Mammalian Gene Collection (MGC).</title>
        <authorList>
            <consortium name="The MGC Project Team"/>
        </authorList>
    </citation>
    <scope>NUCLEOTIDE SEQUENCE [LARGE SCALE MRNA]</scope>
</reference>
<reference key="3">
    <citation type="journal article" date="1998" name="Proc. Natl. Acad. Sci. U.S.A.">
        <title>A novel frizzled gene identified in human esophageal carcinoma mediates APC/beta-catenin signals.</title>
        <authorList>
            <person name="Tanaka S."/>
            <person name="Akiyoshi T."/>
            <person name="Mori M."/>
            <person name="Wands J.R."/>
            <person name="Sugimachi K."/>
        </authorList>
    </citation>
    <scope>NUCLEOTIDE SEQUENCE [MRNA] OF 265-325</scope>
    <source>
        <tissue>Esophageal carcinoma</tissue>
    </source>
</reference>
<reference key="4">
    <citation type="journal article" date="2009" name="Mol. Cell. Biol.">
        <title>Myocilin is a modulator of Wnt signaling.</title>
        <authorList>
            <person name="Kwon H.S."/>
            <person name="Lee H.S."/>
            <person name="Ji Y."/>
            <person name="Rubin J.S."/>
            <person name="Tomarev S.I."/>
        </authorList>
    </citation>
    <scope>INTERACTION WITH MYOC</scope>
    <scope>SUBCELLULAR LOCATION</scope>
</reference>
<evidence type="ECO:0000250" key="1"/>
<evidence type="ECO:0000250" key="2">
    <source>
        <dbReference type="UniProtKB" id="Q8BKG4"/>
    </source>
</evidence>
<evidence type="ECO:0000255" key="3"/>
<evidence type="ECO:0000255" key="4">
    <source>
        <dbReference type="PROSITE-ProRule" id="PRU00090"/>
    </source>
</evidence>
<evidence type="ECO:0000256" key="5">
    <source>
        <dbReference type="SAM" id="MobiDB-lite"/>
    </source>
</evidence>
<evidence type="ECO:0000269" key="6">
    <source>
    </source>
</evidence>
<evidence type="ECO:0000269" key="7">
    <source>
    </source>
</evidence>
<evidence type="ECO:0000305" key="8"/>
<evidence type="ECO:0000305" key="9">
    <source>
    </source>
</evidence>
<evidence type="ECO:0007829" key="10">
    <source>
        <dbReference type="PDB" id="7X8Q"/>
    </source>
</evidence>
<evidence type="ECO:0007829" key="11">
    <source>
        <dbReference type="PDB" id="7X8T"/>
    </source>
</evidence>
<dbReference type="EMBL" id="AB027464">
    <property type="protein sequence ID" value="BAA84093.1"/>
    <property type="molecule type" value="mRNA"/>
</dbReference>
<dbReference type="EMBL" id="BC074997">
    <property type="protein sequence ID" value="AAH74997.1"/>
    <property type="molecule type" value="mRNA"/>
</dbReference>
<dbReference type="EMBL" id="BC074998">
    <property type="protein sequence ID" value="AAH74998.1"/>
    <property type="molecule type" value="mRNA"/>
</dbReference>
<dbReference type="CCDS" id="CCDS9267.1"/>
<dbReference type="PIR" id="JC7086">
    <property type="entry name" value="JC7086"/>
</dbReference>
<dbReference type="RefSeq" id="NP_009128.1">
    <property type="nucleotide sequence ID" value="NM_007197.4"/>
</dbReference>
<dbReference type="PDB" id="7X8Q">
    <property type="method" value="X-ray"/>
    <property type="resolution" value="2.65 A"/>
    <property type="chains" value="A/D=24-152"/>
</dbReference>
<dbReference type="PDB" id="7X8T">
    <property type="method" value="X-ray"/>
    <property type="resolution" value="2.51 A"/>
    <property type="chains" value="A/D/G/J=24-152"/>
</dbReference>
<dbReference type="PDBsum" id="7X8Q"/>
<dbReference type="PDBsum" id="7X8T"/>
<dbReference type="SMR" id="Q9ULW2"/>
<dbReference type="BioGRID" id="116380">
    <property type="interactions" value="71"/>
</dbReference>
<dbReference type="FunCoup" id="Q9ULW2">
    <property type="interactions" value="695"/>
</dbReference>
<dbReference type="IntAct" id="Q9ULW2">
    <property type="interactions" value="61"/>
</dbReference>
<dbReference type="STRING" id="9606.ENSP00000229030"/>
<dbReference type="ChEMBL" id="CHEMBL4523492"/>
<dbReference type="GlyCosmos" id="Q9ULW2">
    <property type="glycosylation" value="3 sites, No reported glycans"/>
</dbReference>
<dbReference type="GlyGen" id="Q9ULW2">
    <property type="glycosylation" value="3 sites, 2 N-linked glycans (2 sites)"/>
</dbReference>
<dbReference type="iPTMnet" id="Q9ULW2"/>
<dbReference type="PhosphoSitePlus" id="Q9ULW2"/>
<dbReference type="BioMuta" id="FZD10"/>
<dbReference type="DMDM" id="17433091"/>
<dbReference type="MassIVE" id="Q9ULW2"/>
<dbReference type="PaxDb" id="9606-ENSP00000229030"/>
<dbReference type="PeptideAtlas" id="Q9ULW2"/>
<dbReference type="ProteomicsDB" id="85140"/>
<dbReference type="ABCD" id="Q9ULW2">
    <property type="antibodies" value="11 sequenced antibodies"/>
</dbReference>
<dbReference type="Antibodypedia" id="2928">
    <property type="antibodies" value="269 antibodies from 34 providers"/>
</dbReference>
<dbReference type="DNASU" id="11211"/>
<dbReference type="Ensembl" id="ENST00000229030.5">
    <property type="protein sequence ID" value="ENSP00000229030.4"/>
    <property type="gene ID" value="ENSG00000111432.5"/>
</dbReference>
<dbReference type="GeneID" id="11211"/>
<dbReference type="KEGG" id="hsa:11211"/>
<dbReference type="MANE-Select" id="ENST00000229030.5">
    <property type="protein sequence ID" value="ENSP00000229030.4"/>
    <property type="RefSeq nucleotide sequence ID" value="NM_007197.4"/>
    <property type="RefSeq protein sequence ID" value="NP_009128.1"/>
</dbReference>
<dbReference type="UCSC" id="uc001uii.4">
    <property type="organism name" value="human"/>
</dbReference>
<dbReference type="AGR" id="HGNC:4039"/>
<dbReference type="CTD" id="11211"/>
<dbReference type="DisGeNET" id="11211"/>
<dbReference type="GeneCards" id="FZD10"/>
<dbReference type="HGNC" id="HGNC:4039">
    <property type="gene designation" value="FZD10"/>
</dbReference>
<dbReference type="HPA" id="ENSG00000111432">
    <property type="expression patterns" value="Tissue enhanced (esophagus, skin)"/>
</dbReference>
<dbReference type="MIM" id="606147">
    <property type="type" value="gene"/>
</dbReference>
<dbReference type="neXtProt" id="NX_Q9ULW2"/>
<dbReference type="OpenTargets" id="ENSG00000111432"/>
<dbReference type="PharmGKB" id="PA28456"/>
<dbReference type="VEuPathDB" id="HostDB:ENSG00000111432"/>
<dbReference type="eggNOG" id="KOG3577">
    <property type="taxonomic scope" value="Eukaryota"/>
</dbReference>
<dbReference type="GeneTree" id="ENSGT00940000161861"/>
<dbReference type="HOGENOM" id="CLU_007873_2_1_1"/>
<dbReference type="InParanoid" id="Q9ULW2"/>
<dbReference type="OMA" id="WSILCFF"/>
<dbReference type="OrthoDB" id="5959102at2759"/>
<dbReference type="PAN-GO" id="Q9ULW2">
    <property type="GO annotations" value="6 GO annotations based on evolutionary models"/>
</dbReference>
<dbReference type="PhylomeDB" id="Q9ULW2"/>
<dbReference type="TreeFam" id="TF317907"/>
<dbReference type="PathwayCommons" id="Q9ULW2"/>
<dbReference type="Reactome" id="R-HSA-373080">
    <property type="pathway name" value="Class B/2 (Secretin family receptors)"/>
</dbReference>
<dbReference type="SignaLink" id="Q9ULW2"/>
<dbReference type="SIGNOR" id="Q9ULW2"/>
<dbReference type="BioGRID-ORCS" id="11211">
    <property type="hits" value="9 hits in 1108 CRISPR screens"/>
</dbReference>
<dbReference type="GeneWiki" id="FZD10"/>
<dbReference type="GenomeRNAi" id="11211"/>
<dbReference type="Pharos" id="Q9ULW2">
    <property type="development level" value="Tbio"/>
</dbReference>
<dbReference type="PRO" id="PR:Q9ULW2"/>
<dbReference type="Proteomes" id="UP000005640">
    <property type="component" value="Chromosome 12"/>
</dbReference>
<dbReference type="RNAct" id="Q9ULW2">
    <property type="molecule type" value="protein"/>
</dbReference>
<dbReference type="Bgee" id="ENSG00000111432">
    <property type="expression patterns" value="Expressed in gingival epithelium and 125 other cell types or tissues"/>
</dbReference>
<dbReference type="ExpressionAtlas" id="Q9ULW2">
    <property type="expression patterns" value="baseline and differential"/>
</dbReference>
<dbReference type="GO" id="GO:0009986">
    <property type="term" value="C:cell surface"/>
    <property type="evidence" value="ECO:0000314"/>
    <property type="project" value="BHF-UCL"/>
</dbReference>
<dbReference type="GO" id="GO:0005737">
    <property type="term" value="C:cytoplasm"/>
    <property type="evidence" value="ECO:0000314"/>
    <property type="project" value="BHF-UCL"/>
</dbReference>
<dbReference type="GO" id="GO:0005615">
    <property type="term" value="C:extracellular space"/>
    <property type="evidence" value="ECO:0000318"/>
    <property type="project" value="GO_Central"/>
</dbReference>
<dbReference type="GO" id="GO:0005654">
    <property type="term" value="C:nucleoplasm"/>
    <property type="evidence" value="ECO:0000314"/>
    <property type="project" value="HPA"/>
</dbReference>
<dbReference type="GO" id="GO:0005886">
    <property type="term" value="C:plasma membrane"/>
    <property type="evidence" value="ECO:0000304"/>
    <property type="project" value="ProtInc"/>
</dbReference>
<dbReference type="GO" id="GO:0004930">
    <property type="term" value="F:G protein-coupled receptor activity"/>
    <property type="evidence" value="ECO:0007669"/>
    <property type="project" value="UniProtKB-KW"/>
</dbReference>
<dbReference type="GO" id="GO:0042813">
    <property type="term" value="F:Wnt receptor activity"/>
    <property type="evidence" value="ECO:0000314"/>
    <property type="project" value="WormBase"/>
</dbReference>
<dbReference type="GO" id="GO:0017147">
    <property type="term" value="F:Wnt-protein binding"/>
    <property type="evidence" value="ECO:0000318"/>
    <property type="project" value="GO_Central"/>
</dbReference>
<dbReference type="GO" id="GO:0060070">
    <property type="term" value="P:canonical Wnt signaling pathway"/>
    <property type="evidence" value="ECO:0000314"/>
    <property type="project" value="WormBase"/>
</dbReference>
<dbReference type="GO" id="GO:0071300">
    <property type="term" value="P:cellular response to retinoic acid"/>
    <property type="evidence" value="ECO:0000250"/>
    <property type="project" value="UniProtKB"/>
</dbReference>
<dbReference type="GO" id="GO:0030182">
    <property type="term" value="P:neuron differentiation"/>
    <property type="evidence" value="ECO:0000250"/>
    <property type="project" value="UniProtKB"/>
</dbReference>
<dbReference type="GO" id="GO:0035567">
    <property type="term" value="P:non-canonical Wnt signaling pathway"/>
    <property type="evidence" value="ECO:0000315"/>
    <property type="project" value="BHF-UCL"/>
</dbReference>
<dbReference type="GO" id="GO:0046330">
    <property type="term" value="P:positive regulation of JNK cascade"/>
    <property type="evidence" value="ECO:0000315"/>
    <property type="project" value="BHF-UCL"/>
</dbReference>
<dbReference type="GO" id="GO:0032956">
    <property type="term" value="P:regulation of actin cytoskeleton organization"/>
    <property type="evidence" value="ECO:0000315"/>
    <property type="project" value="BHF-UCL"/>
</dbReference>
<dbReference type="CDD" id="cd15037">
    <property type="entry name" value="7tmF_FZD10"/>
    <property type="match status" value="1"/>
</dbReference>
<dbReference type="CDD" id="cd07462">
    <property type="entry name" value="CRD_FZ10"/>
    <property type="match status" value="1"/>
</dbReference>
<dbReference type="FunFam" id="1.10.2000.10:FF:000007">
    <property type="entry name" value="Frizzled class receptor 10"/>
    <property type="match status" value="1"/>
</dbReference>
<dbReference type="FunFam" id="1.20.1070.10:FF:000020">
    <property type="entry name" value="Frizzled class receptor 10"/>
    <property type="match status" value="1"/>
</dbReference>
<dbReference type="Gene3D" id="1.10.2000.10">
    <property type="entry name" value="Frizzled cysteine-rich domain"/>
    <property type="match status" value="1"/>
</dbReference>
<dbReference type="Gene3D" id="1.20.1070.10">
    <property type="entry name" value="Rhodopsin 7-helix transmembrane proteins"/>
    <property type="match status" value="1"/>
</dbReference>
<dbReference type="InterPro" id="IPR015526">
    <property type="entry name" value="Frizzled/SFRP"/>
</dbReference>
<dbReference type="InterPro" id="IPR000539">
    <property type="entry name" value="Frizzled/Smoothened_7TM"/>
</dbReference>
<dbReference type="InterPro" id="IPR020067">
    <property type="entry name" value="Frizzled_dom"/>
</dbReference>
<dbReference type="InterPro" id="IPR036790">
    <property type="entry name" value="Frizzled_dom_sf"/>
</dbReference>
<dbReference type="InterPro" id="IPR017981">
    <property type="entry name" value="GPCR_2-like_7TM"/>
</dbReference>
<dbReference type="PANTHER" id="PTHR11309">
    <property type="entry name" value="FRIZZLED"/>
    <property type="match status" value="1"/>
</dbReference>
<dbReference type="PANTHER" id="PTHR11309:SF86">
    <property type="entry name" value="FRIZZLED-10"/>
    <property type="match status" value="1"/>
</dbReference>
<dbReference type="Pfam" id="PF01534">
    <property type="entry name" value="Frizzled"/>
    <property type="match status" value="1"/>
</dbReference>
<dbReference type="Pfam" id="PF01392">
    <property type="entry name" value="Fz"/>
    <property type="match status" value="1"/>
</dbReference>
<dbReference type="PRINTS" id="PR00489">
    <property type="entry name" value="FRIZZLED"/>
</dbReference>
<dbReference type="SMART" id="SM00063">
    <property type="entry name" value="FRI"/>
    <property type="match status" value="1"/>
</dbReference>
<dbReference type="SMART" id="SM01330">
    <property type="entry name" value="Frizzled"/>
    <property type="match status" value="1"/>
</dbReference>
<dbReference type="SUPFAM" id="SSF63501">
    <property type="entry name" value="Frizzled cysteine-rich domain"/>
    <property type="match status" value="1"/>
</dbReference>
<dbReference type="PROSITE" id="PS50038">
    <property type="entry name" value="FZ"/>
    <property type="match status" value="1"/>
</dbReference>
<dbReference type="PROSITE" id="PS50261">
    <property type="entry name" value="G_PROTEIN_RECEP_F2_4"/>
    <property type="match status" value="1"/>
</dbReference>
<sequence>MQRPGPRLWLVLQVMGSCAAISSMDMERPGDGKCQPIEIPMCKDIGYNMTRMPNLMGHENQREAAIQLHEFAPLVEYGCHGHLRFFLCSLYAPMCTEQVSTPIPACRVMCEQARLKCSPIMEQFNFKWPDSLDCRKLPNKNDPNYLCMEAPNNGSDEPTRGSGLFPPLFRPQRPHSAQEHPLKDGGPGRGGCDNPGKFHHVEKSASCAPLCTPGVDVYWSREDKRFAVVWLAIWAVLCFFSSAFTVLTFLIDPARFRYPERPIIFLSMCYCVYSVGYLIRLFAGAESIACDRDSGQLYVIQEGLESTGCTLVFLVLYYFGMASSLWWVVLTLTWFLAAGKKWGHEAIEANSSYFHLAAWAIPAVKTILILVMRRVAGDELTGVCYVGSMDVNALTGFVLIPLACYLVIGTSFILSGFVALFHIRRVMKTGGENTDKLEKLMVRIGLFSVLYTVPATCVIACYFYERLNMDYWKILAAQHKCKMNNQTKTLDCLMAASIPAVEIFMVKIFMLLVVGITSGMWIWTSKTLQSWQQVCSRRLKKKSRRKPASVITSGGIYKKAQHPQKTHHGKYEIPAQSPTCV</sequence>
<accession>Q9ULW2</accession>
<keyword id="KW-0002">3D-structure</keyword>
<keyword id="KW-1003">Cell membrane</keyword>
<keyword id="KW-0217">Developmental protein</keyword>
<keyword id="KW-1015">Disulfide bond</keyword>
<keyword id="KW-0297">G-protein coupled receptor</keyword>
<keyword id="KW-0325">Glycoprotein</keyword>
<keyword id="KW-0472">Membrane</keyword>
<keyword id="KW-1267">Proteomics identification</keyword>
<keyword id="KW-0675">Receptor</keyword>
<keyword id="KW-1185">Reference proteome</keyword>
<keyword id="KW-0732">Signal</keyword>
<keyword id="KW-0807">Transducer</keyword>
<keyword id="KW-0812">Transmembrane</keyword>
<keyword id="KW-1133">Transmembrane helix</keyword>
<keyword id="KW-0832">Ubl conjugation</keyword>
<keyword id="KW-0879">Wnt signaling pathway</keyword>
<name>FZD10_HUMAN</name>
<feature type="signal peptide" evidence="3">
    <location>
        <begin position="1"/>
        <end position="20"/>
    </location>
</feature>
<feature type="chain" id="PRO_0000013005" description="Frizzled-10">
    <location>
        <begin position="21"/>
        <end position="581"/>
    </location>
</feature>
<feature type="topological domain" description="Extracellular" evidence="3">
    <location>
        <begin position="21"/>
        <end position="225"/>
    </location>
</feature>
<feature type="transmembrane region" description="Helical; Name=1" evidence="3">
    <location>
        <begin position="226"/>
        <end position="246"/>
    </location>
</feature>
<feature type="topological domain" description="Cytoplasmic" evidence="3">
    <location>
        <begin position="247"/>
        <end position="262"/>
    </location>
</feature>
<feature type="transmembrane region" description="Helical; Name=2" evidence="3">
    <location>
        <begin position="263"/>
        <end position="283"/>
    </location>
</feature>
<feature type="topological domain" description="Extracellular" evidence="3">
    <location>
        <begin position="284"/>
        <end position="311"/>
    </location>
</feature>
<feature type="transmembrane region" description="Helical; Name=3" evidence="3">
    <location>
        <begin position="312"/>
        <end position="332"/>
    </location>
</feature>
<feature type="topological domain" description="Cytoplasmic" evidence="3">
    <location>
        <begin position="333"/>
        <end position="351"/>
    </location>
</feature>
<feature type="transmembrane region" description="Helical; Name=4" evidence="3">
    <location>
        <begin position="352"/>
        <end position="372"/>
    </location>
</feature>
<feature type="topological domain" description="Extracellular" evidence="3">
    <location>
        <begin position="373"/>
        <end position="393"/>
    </location>
</feature>
<feature type="transmembrane region" description="Helical; Name=5" evidence="3">
    <location>
        <begin position="394"/>
        <end position="414"/>
    </location>
</feature>
<feature type="topological domain" description="Cytoplasmic" evidence="3">
    <location>
        <begin position="415"/>
        <end position="443"/>
    </location>
</feature>
<feature type="transmembrane region" description="Helical; Name=6" evidence="3">
    <location>
        <begin position="444"/>
        <end position="464"/>
    </location>
</feature>
<feature type="topological domain" description="Extracellular" evidence="3">
    <location>
        <begin position="465"/>
        <end position="502"/>
    </location>
</feature>
<feature type="transmembrane region" description="Helical; Name=7" evidence="3">
    <location>
        <begin position="503"/>
        <end position="523"/>
    </location>
</feature>
<feature type="topological domain" description="Cytoplasmic" evidence="3">
    <location>
        <begin position="524"/>
        <end position="581"/>
    </location>
</feature>
<feature type="domain" description="FZ" evidence="4">
    <location>
        <begin position="29"/>
        <end position="150"/>
    </location>
</feature>
<feature type="region of interest" description="Disordered" evidence="5">
    <location>
        <begin position="560"/>
        <end position="581"/>
    </location>
</feature>
<feature type="short sequence motif" description="Lys-Thr-X-X-X-Trp motif, mediates interaction with the PDZ domain of Dvl family members" evidence="1">
    <location>
        <begin position="526"/>
        <end position="531"/>
    </location>
</feature>
<feature type="short sequence motif" description="PDZ-binding">
    <location>
        <begin position="579"/>
        <end position="581"/>
    </location>
</feature>
<feature type="glycosylation site" description="N-linked (GlcNAc...) asparagine" evidence="3">
    <location>
        <position position="48"/>
    </location>
</feature>
<feature type="glycosylation site" description="N-linked (GlcNAc...) asparagine" evidence="3">
    <location>
        <position position="153"/>
    </location>
</feature>
<feature type="glycosylation site" description="N-linked (GlcNAc...) asparagine" evidence="3">
    <location>
        <position position="485"/>
    </location>
</feature>
<feature type="disulfide bond" evidence="4">
    <location>
        <begin position="34"/>
        <end position="95"/>
    </location>
</feature>
<feature type="disulfide bond" evidence="4">
    <location>
        <begin position="42"/>
        <end position="88"/>
    </location>
</feature>
<feature type="disulfide bond" evidence="4">
    <location>
        <begin position="79"/>
        <end position="117"/>
    </location>
</feature>
<feature type="disulfide bond" evidence="4">
    <location>
        <begin position="106"/>
        <end position="147"/>
    </location>
</feature>
<feature type="disulfide bond" evidence="4">
    <location>
        <begin position="110"/>
        <end position="134"/>
    </location>
</feature>
<feature type="helix" evidence="11">
    <location>
        <begin position="40"/>
        <end position="42"/>
    </location>
</feature>
<feature type="helix" evidence="11">
    <location>
        <begin position="61"/>
        <end position="68"/>
    </location>
</feature>
<feature type="helix" evidence="11">
    <location>
        <begin position="69"/>
        <end position="71"/>
    </location>
</feature>
<feature type="helix" evidence="11">
    <location>
        <begin position="72"/>
        <end position="76"/>
    </location>
</feature>
<feature type="helix" evidence="11">
    <location>
        <begin position="83"/>
        <end position="91"/>
    </location>
</feature>
<feature type="strand" evidence="10">
    <location>
        <begin position="97"/>
        <end position="99"/>
    </location>
</feature>
<feature type="helix" evidence="11">
    <location>
        <begin position="107"/>
        <end position="116"/>
    </location>
</feature>
<feature type="helix" evidence="11">
    <location>
        <begin position="118"/>
        <end position="123"/>
    </location>
</feature>
<feature type="helix" evidence="11">
    <location>
        <begin position="130"/>
        <end position="132"/>
    </location>
</feature>
<feature type="helix" evidence="11">
    <location>
        <begin position="134"/>
        <end position="136"/>
    </location>
</feature>
<feature type="strand" evidence="11">
    <location>
        <begin position="143"/>
        <end position="145"/>
    </location>
</feature>